<dbReference type="PIR" id="A02317">
    <property type="entry name" value="HADLA"/>
</dbReference>
<dbReference type="SMR" id="P01996"/>
<dbReference type="GO" id="GO:0072562">
    <property type="term" value="C:blood microparticle"/>
    <property type="evidence" value="ECO:0007669"/>
    <property type="project" value="TreeGrafter"/>
</dbReference>
<dbReference type="GO" id="GO:0031838">
    <property type="term" value="C:haptoglobin-hemoglobin complex"/>
    <property type="evidence" value="ECO:0007669"/>
    <property type="project" value="TreeGrafter"/>
</dbReference>
<dbReference type="GO" id="GO:0005833">
    <property type="term" value="C:hemoglobin complex"/>
    <property type="evidence" value="ECO:0007669"/>
    <property type="project" value="InterPro"/>
</dbReference>
<dbReference type="GO" id="GO:0031720">
    <property type="term" value="F:haptoglobin binding"/>
    <property type="evidence" value="ECO:0007669"/>
    <property type="project" value="TreeGrafter"/>
</dbReference>
<dbReference type="GO" id="GO:0020037">
    <property type="term" value="F:heme binding"/>
    <property type="evidence" value="ECO:0007669"/>
    <property type="project" value="InterPro"/>
</dbReference>
<dbReference type="GO" id="GO:0005506">
    <property type="term" value="F:iron ion binding"/>
    <property type="evidence" value="ECO:0007669"/>
    <property type="project" value="InterPro"/>
</dbReference>
<dbReference type="GO" id="GO:0043177">
    <property type="term" value="F:organic acid binding"/>
    <property type="evidence" value="ECO:0007669"/>
    <property type="project" value="TreeGrafter"/>
</dbReference>
<dbReference type="GO" id="GO:0019825">
    <property type="term" value="F:oxygen binding"/>
    <property type="evidence" value="ECO:0007669"/>
    <property type="project" value="InterPro"/>
</dbReference>
<dbReference type="GO" id="GO:0005344">
    <property type="term" value="F:oxygen carrier activity"/>
    <property type="evidence" value="ECO:0007669"/>
    <property type="project" value="UniProtKB-KW"/>
</dbReference>
<dbReference type="GO" id="GO:0004601">
    <property type="term" value="F:peroxidase activity"/>
    <property type="evidence" value="ECO:0007669"/>
    <property type="project" value="TreeGrafter"/>
</dbReference>
<dbReference type="GO" id="GO:0042744">
    <property type="term" value="P:hydrogen peroxide catabolic process"/>
    <property type="evidence" value="ECO:0007669"/>
    <property type="project" value="TreeGrafter"/>
</dbReference>
<dbReference type="CDD" id="cd08927">
    <property type="entry name" value="Hb-alpha-like"/>
    <property type="match status" value="1"/>
</dbReference>
<dbReference type="FunFam" id="1.10.490.10:FF:000002">
    <property type="entry name" value="Hemoglobin subunit alpha"/>
    <property type="match status" value="1"/>
</dbReference>
<dbReference type="Gene3D" id="1.10.490.10">
    <property type="entry name" value="Globins"/>
    <property type="match status" value="1"/>
</dbReference>
<dbReference type="InterPro" id="IPR000971">
    <property type="entry name" value="Globin"/>
</dbReference>
<dbReference type="InterPro" id="IPR009050">
    <property type="entry name" value="Globin-like_sf"/>
</dbReference>
<dbReference type="InterPro" id="IPR012292">
    <property type="entry name" value="Globin/Proto"/>
</dbReference>
<dbReference type="InterPro" id="IPR002338">
    <property type="entry name" value="Hemoglobin_a-typ"/>
</dbReference>
<dbReference type="InterPro" id="IPR050056">
    <property type="entry name" value="Hemoglobin_oxygen_transport"/>
</dbReference>
<dbReference type="InterPro" id="IPR002339">
    <property type="entry name" value="Hemoglobin_pi"/>
</dbReference>
<dbReference type="PANTHER" id="PTHR11442">
    <property type="entry name" value="HEMOGLOBIN FAMILY MEMBER"/>
    <property type="match status" value="1"/>
</dbReference>
<dbReference type="PANTHER" id="PTHR11442:SF48">
    <property type="entry name" value="HEMOGLOBIN SUBUNIT ALPHA"/>
    <property type="match status" value="1"/>
</dbReference>
<dbReference type="Pfam" id="PF00042">
    <property type="entry name" value="Globin"/>
    <property type="match status" value="1"/>
</dbReference>
<dbReference type="PRINTS" id="PR00612">
    <property type="entry name" value="ALPHAHAEM"/>
</dbReference>
<dbReference type="PRINTS" id="PR00815">
    <property type="entry name" value="PIHAEM"/>
</dbReference>
<dbReference type="SUPFAM" id="SSF46458">
    <property type="entry name" value="Globin-like"/>
    <property type="match status" value="1"/>
</dbReference>
<dbReference type="PROSITE" id="PS01033">
    <property type="entry name" value="GLOBIN"/>
    <property type="match status" value="1"/>
</dbReference>
<reference key="1">
    <citation type="journal article" date="1985" name="Biol. Chem. Hoppe-Seyler">
        <title>The primary structure of alpha A- and beta-chains from blue- and-yellow macaw (Ara ararauna, Psittaci) hemoglobin. No evidence for expression of alpha D-chains.</title>
        <authorList>
            <person name="Godovac-Zimmermann J."/>
            <person name="Braunitzer G."/>
        </authorList>
    </citation>
    <scope>PROTEIN SEQUENCE OF 2-142</scope>
</reference>
<gene>
    <name type="primary">HBAA</name>
</gene>
<evidence type="ECO:0000250" key="1"/>
<evidence type="ECO:0000255" key="2">
    <source>
        <dbReference type="PROSITE-ProRule" id="PRU00238"/>
    </source>
</evidence>
<feature type="initiator methionine" description="Removed" evidence="1">
    <location>
        <position position="1"/>
    </location>
</feature>
<feature type="chain" id="PRO_0000052558" description="Hemoglobin subunit alpha-A">
    <location>
        <begin position="2"/>
        <end position="142"/>
    </location>
</feature>
<feature type="domain" description="Globin" evidence="2">
    <location>
        <begin position="2"/>
        <end position="142"/>
    </location>
</feature>
<feature type="binding site" evidence="2">
    <location>
        <position position="59"/>
    </location>
    <ligand>
        <name>O2</name>
        <dbReference type="ChEBI" id="CHEBI:15379"/>
    </ligand>
</feature>
<feature type="binding site" description="proximal binding residue" evidence="2">
    <location>
        <position position="88"/>
    </location>
    <ligand>
        <name>heme b</name>
        <dbReference type="ChEBI" id="CHEBI:60344"/>
    </ligand>
    <ligandPart>
        <name>Fe</name>
        <dbReference type="ChEBI" id="CHEBI:18248"/>
    </ligandPart>
</feature>
<sequence>MVLSGSDKTNVKGIFSKIGGQAEDYGAEALERMFATFPQTKTYFPHFDVSPGSAQVKAHGKKVAAALVEAANHIDDIATALSKLSDLHAQKLRVDPVNFKLLGQCFLVVVAIHNPSALTPEVHASLDKFLCAVGNVLTAKYR</sequence>
<comment type="function">
    <text>Involved in oxygen transport from the lung to the various peripheral tissues.</text>
</comment>
<comment type="subunit">
    <text>Heterotetramer of two alpha chains and two beta chains.</text>
</comment>
<comment type="tissue specificity">
    <text>Red blood cells.</text>
</comment>
<comment type="similarity">
    <text evidence="2">Belongs to the globin family.</text>
</comment>
<protein>
    <recommendedName>
        <fullName>Hemoglobin subunit alpha-A</fullName>
    </recommendedName>
    <alternativeName>
        <fullName>Alpha-A-globin</fullName>
    </alternativeName>
    <alternativeName>
        <fullName>Hemoglobin alpha-A chain</fullName>
    </alternativeName>
</protein>
<organism>
    <name type="scientific">Ara ararauna</name>
    <name type="common">Blue-and-yellow macaw</name>
    <dbReference type="NCBI Taxonomy" id="9226"/>
    <lineage>
        <taxon>Eukaryota</taxon>
        <taxon>Metazoa</taxon>
        <taxon>Chordata</taxon>
        <taxon>Craniata</taxon>
        <taxon>Vertebrata</taxon>
        <taxon>Euteleostomi</taxon>
        <taxon>Archelosauria</taxon>
        <taxon>Archosauria</taxon>
        <taxon>Dinosauria</taxon>
        <taxon>Saurischia</taxon>
        <taxon>Theropoda</taxon>
        <taxon>Coelurosauria</taxon>
        <taxon>Aves</taxon>
        <taxon>Neognathae</taxon>
        <taxon>Neoaves</taxon>
        <taxon>Telluraves</taxon>
        <taxon>Australaves</taxon>
        <taxon>Psittaciformes</taxon>
        <taxon>Psittacidae</taxon>
        <taxon>Ara</taxon>
    </lineage>
</organism>
<keyword id="KW-0903">Direct protein sequencing</keyword>
<keyword id="KW-0349">Heme</keyword>
<keyword id="KW-0408">Iron</keyword>
<keyword id="KW-0479">Metal-binding</keyword>
<keyword id="KW-0561">Oxygen transport</keyword>
<keyword id="KW-0813">Transport</keyword>
<proteinExistence type="evidence at protein level"/>
<name>HBA_ARAAR</name>
<accession>P01996</accession>